<evidence type="ECO:0000255" key="1">
    <source>
        <dbReference type="HAMAP-Rule" id="MF_00361"/>
    </source>
</evidence>
<name>NADK_BURCJ</name>
<accession>B4EDZ8</accession>
<feature type="chain" id="PRO_1000120834" description="NAD kinase">
    <location>
        <begin position="1"/>
        <end position="300"/>
    </location>
</feature>
<feature type="active site" description="Proton acceptor" evidence="1">
    <location>
        <position position="75"/>
    </location>
</feature>
<feature type="binding site" evidence="1">
    <location>
        <begin position="75"/>
        <end position="76"/>
    </location>
    <ligand>
        <name>NAD(+)</name>
        <dbReference type="ChEBI" id="CHEBI:57540"/>
    </ligand>
</feature>
<feature type="binding site" evidence="1">
    <location>
        <begin position="149"/>
        <end position="150"/>
    </location>
    <ligand>
        <name>NAD(+)</name>
        <dbReference type="ChEBI" id="CHEBI:57540"/>
    </ligand>
</feature>
<feature type="binding site" evidence="1">
    <location>
        <position position="177"/>
    </location>
    <ligand>
        <name>NAD(+)</name>
        <dbReference type="ChEBI" id="CHEBI:57540"/>
    </ligand>
</feature>
<feature type="binding site" evidence="1">
    <location>
        <position position="179"/>
    </location>
    <ligand>
        <name>NAD(+)</name>
        <dbReference type="ChEBI" id="CHEBI:57540"/>
    </ligand>
</feature>
<feature type="binding site" evidence="1">
    <location>
        <begin position="190"/>
        <end position="195"/>
    </location>
    <ligand>
        <name>NAD(+)</name>
        <dbReference type="ChEBI" id="CHEBI:57540"/>
    </ligand>
</feature>
<feature type="binding site" evidence="1">
    <location>
        <position position="214"/>
    </location>
    <ligand>
        <name>NAD(+)</name>
        <dbReference type="ChEBI" id="CHEBI:57540"/>
    </ligand>
</feature>
<feature type="binding site" evidence="1">
    <location>
        <position position="248"/>
    </location>
    <ligand>
        <name>NAD(+)</name>
        <dbReference type="ChEBI" id="CHEBI:57540"/>
    </ligand>
</feature>
<organism>
    <name type="scientific">Burkholderia cenocepacia (strain ATCC BAA-245 / DSM 16553 / LMG 16656 / NCTC 13227 / J2315 / CF5610)</name>
    <name type="common">Burkholderia cepacia (strain J2315)</name>
    <dbReference type="NCBI Taxonomy" id="216591"/>
    <lineage>
        <taxon>Bacteria</taxon>
        <taxon>Pseudomonadati</taxon>
        <taxon>Pseudomonadota</taxon>
        <taxon>Betaproteobacteria</taxon>
        <taxon>Burkholderiales</taxon>
        <taxon>Burkholderiaceae</taxon>
        <taxon>Burkholderia</taxon>
        <taxon>Burkholderia cepacia complex</taxon>
    </lineage>
</organism>
<keyword id="KW-0067">ATP-binding</keyword>
<keyword id="KW-0963">Cytoplasm</keyword>
<keyword id="KW-0418">Kinase</keyword>
<keyword id="KW-0520">NAD</keyword>
<keyword id="KW-0521">NADP</keyword>
<keyword id="KW-0547">Nucleotide-binding</keyword>
<keyword id="KW-0808">Transferase</keyword>
<proteinExistence type="inferred from homology"/>
<reference key="1">
    <citation type="journal article" date="2009" name="J. Bacteriol.">
        <title>The genome of Burkholderia cenocepacia J2315, an epidemic pathogen of cystic fibrosis patients.</title>
        <authorList>
            <person name="Holden M.T."/>
            <person name="Seth-Smith H.M."/>
            <person name="Crossman L.C."/>
            <person name="Sebaihia M."/>
            <person name="Bentley S.D."/>
            <person name="Cerdeno-Tarraga A.M."/>
            <person name="Thomson N.R."/>
            <person name="Bason N."/>
            <person name="Quail M.A."/>
            <person name="Sharp S."/>
            <person name="Cherevach I."/>
            <person name="Churcher C."/>
            <person name="Goodhead I."/>
            <person name="Hauser H."/>
            <person name="Holroyd N."/>
            <person name="Mungall K."/>
            <person name="Scott P."/>
            <person name="Walker D."/>
            <person name="White B."/>
            <person name="Rose H."/>
            <person name="Iversen P."/>
            <person name="Mil-Homens D."/>
            <person name="Rocha E.P."/>
            <person name="Fialho A.M."/>
            <person name="Baldwin A."/>
            <person name="Dowson C."/>
            <person name="Barrell B.G."/>
            <person name="Govan J.R."/>
            <person name="Vandamme P."/>
            <person name="Hart C.A."/>
            <person name="Mahenthiralingam E."/>
            <person name="Parkhill J."/>
        </authorList>
    </citation>
    <scope>NUCLEOTIDE SEQUENCE [LARGE SCALE GENOMIC DNA]</scope>
    <source>
        <strain>ATCC BAA-245 / DSM 16553 / LMG 16656 / NCTC 13227 / J2315 / CF5610</strain>
    </source>
</reference>
<protein>
    <recommendedName>
        <fullName evidence="1">NAD kinase</fullName>
        <ecNumber evidence="1">2.7.1.23</ecNumber>
    </recommendedName>
    <alternativeName>
        <fullName evidence="1">ATP-dependent NAD kinase</fullName>
    </alternativeName>
</protein>
<comment type="function">
    <text evidence="1">Involved in the regulation of the intracellular balance of NAD and NADP, and is a key enzyme in the biosynthesis of NADP. Catalyzes specifically the phosphorylation on 2'-hydroxyl of the adenosine moiety of NAD to yield NADP.</text>
</comment>
<comment type="catalytic activity">
    <reaction evidence="1">
        <text>NAD(+) + ATP = ADP + NADP(+) + H(+)</text>
        <dbReference type="Rhea" id="RHEA:18629"/>
        <dbReference type="ChEBI" id="CHEBI:15378"/>
        <dbReference type="ChEBI" id="CHEBI:30616"/>
        <dbReference type="ChEBI" id="CHEBI:57540"/>
        <dbReference type="ChEBI" id="CHEBI:58349"/>
        <dbReference type="ChEBI" id="CHEBI:456216"/>
        <dbReference type="EC" id="2.7.1.23"/>
    </reaction>
</comment>
<comment type="cofactor">
    <cofactor evidence="1">
        <name>a divalent metal cation</name>
        <dbReference type="ChEBI" id="CHEBI:60240"/>
    </cofactor>
</comment>
<comment type="subcellular location">
    <subcellularLocation>
        <location evidence="1">Cytoplasm</location>
    </subcellularLocation>
</comment>
<comment type="similarity">
    <text evidence="1">Belongs to the NAD kinase family.</text>
</comment>
<gene>
    <name evidence="1" type="primary">nadK</name>
    <name type="ordered locus">BceJ2315_32160</name>
    <name type="ORF">BCAL3276</name>
</gene>
<sequence length="300" mass="32276">MKTGNQFNTVALVGRSNTPGIAEPLATLADSIATLGFEVVFEGDTAREIGIAGYPALTPAEIGARADVAIVLGGDGTMLGIGRQLAPYRTPLIGINHGRLGFITDIAASDMQALVPVMLAGKFEREERSLLEARIVRDGEPIYHALAFNDVVVNRSGFSGMVELRASVDGRYMYNQRSDGLIVATPTGSTAYALSSAGPILHPQLAGIVLVPIAPHALSNRPIVLPDDSKIAIQIVGGRDVNVNFDMQSFTSLELNDTIEVRRSKHTVPFLHPIGYSYYTTLRKKLHWNEHASNEDDKAS</sequence>
<dbReference type="EC" id="2.7.1.23" evidence="1"/>
<dbReference type="EMBL" id="AM747720">
    <property type="protein sequence ID" value="CAR53600.1"/>
    <property type="molecule type" value="Genomic_DNA"/>
</dbReference>
<dbReference type="RefSeq" id="WP_006492558.1">
    <property type="nucleotide sequence ID" value="NC_011000.1"/>
</dbReference>
<dbReference type="SMR" id="B4EDZ8"/>
<dbReference type="KEGG" id="bcj:BCAL3276"/>
<dbReference type="eggNOG" id="COG0061">
    <property type="taxonomic scope" value="Bacteria"/>
</dbReference>
<dbReference type="HOGENOM" id="CLU_008831_0_1_4"/>
<dbReference type="BioCyc" id="BCEN216591:G1G1V-3648-MONOMER"/>
<dbReference type="Proteomes" id="UP000001035">
    <property type="component" value="Chromosome 1"/>
</dbReference>
<dbReference type="GO" id="GO:0005737">
    <property type="term" value="C:cytoplasm"/>
    <property type="evidence" value="ECO:0007669"/>
    <property type="project" value="UniProtKB-SubCell"/>
</dbReference>
<dbReference type="GO" id="GO:0005524">
    <property type="term" value="F:ATP binding"/>
    <property type="evidence" value="ECO:0007669"/>
    <property type="project" value="UniProtKB-KW"/>
</dbReference>
<dbReference type="GO" id="GO:0046872">
    <property type="term" value="F:metal ion binding"/>
    <property type="evidence" value="ECO:0007669"/>
    <property type="project" value="UniProtKB-UniRule"/>
</dbReference>
<dbReference type="GO" id="GO:0051287">
    <property type="term" value="F:NAD binding"/>
    <property type="evidence" value="ECO:0007669"/>
    <property type="project" value="UniProtKB-ARBA"/>
</dbReference>
<dbReference type="GO" id="GO:0003951">
    <property type="term" value="F:NAD+ kinase activity"/>
    <property type="evidence" value="ECO:0007669"/>
    <property type="project" value="UniProtKB-UniRule"/>
</dbReference>
<dbReference type="GO" id="GO:0019674">
    <property type="term" value="P:NAD metabolic process"/>
    <property type="evidence" value="ECO:0007669"/>
    <property type="project" value="InterPro"/>
</dbReference>
<dbReference type="GO" id="GO:0006741">
    <property type="term" value="P:NADP biosynthetic process"/>
    <property type="evidence" value="ECO:0007669"/>
    <property type="project" value="UniProtKB-UniRule"/>
</dbReference>
<dbReference type="Gene3D" id="3.40.50.10330">
    <property type="entry name" value="Probable inorganic polyphosphate/atp-NAD kinase, domain 1"/>
    <property type="match status" value="1"/>
</dbReference>
<dbReference type="Gene3D" id="2.60.200.30">
    <property type="entry name" value="Probable inorganic polyphosphate/atp-NAD kinase, domain 2"/>
    <property type="match status" value="1"/>
</dbReference>
<dbReference type="HAMAP" id="MF_00361">
    <property type="entry name" value="NAD_kinase"/>
    <property type="match status" value="1"/>
</dbReference>
<dbReference type="InterPro" id="IPR017438">
    <property type="entry name" value="ATP-NAD_kinase_N"/>
</dbReference>
<dbReference type="InterPro" id="IPR017437">
    <property type="entry name" value="ATP-NAD_kinase_PpnK-typ_C"/>
</dbReference>
<dbReference type="InterPro" id="IPR016064">
    <property type="entry name" value="NAD/diacylglycerol_kinase_sf"/>
</dbReference>
<dbReference type="InterPro" id="IPR002504">
    <property type="entry name" value="NADK"/>
</dbReference>
<dbReference type="NCBIfam" id="NF002561">
    <property type="entry name" value="PRK02155.1"/>
    <property type="match status" value="1"/>
</dbReference>
<dbReference type="PANTHER" id="PTHR20275">
    <property type="entry name" value="NAD KINASE"/>
    <property type="match status" value="1"/>
</dbReference>
<dbReference type="PANTHER" id="PTHR20275:SF0">
    <property type="entry name" value="NAD KINASE"/>
    <property type="match status" value="1"/>
</dbReference>
<dbReference type="Pfam" id="PF01513">
    <property type="entry name" value="NAD_kinase"/>
    <property type="match status" value="1"/>
</dbReference>
<dbReference type="Pfam" id="PF20143">
    <property type="entry name" value="NAD_kinase_C"/>
    <property type="match status" value="1"/>
</dbReference>
<dbReference type="SUPFAM" id="SSF111331">
    <property type="entry name" value="NAD kinase/diacylglycerol kinase-like"/>
    <property type="match status" value="1"/>
</dbReference>